<organism>
    <name type="scientific">Borreliella afzelii (strain PKo)</name>
    <name type="common">Borrelia afzelii</name>
    <dbReference type="NCBI Taxonomy" id="390236"/>
    <lineage>
        <taxon>Bacteria</taxon>
        <taxon>Pseudomonadati</taxon>
        <taxon>Spirochaetota</taxon>
        <taxon>Spirochaetia</taxon>
        <taxon>Spirochaetales</taxon>
        <taxon>Borreliaceae</taxon>
        <taxon>Borreliella</taxon>
    </lineage>
</organism>
<dbReference type="EMBL" id="CP000395">
    <property type="protein sequence ID" value="ABH01447.1"/>
    <property type="molecule type" value="Genomic_DNA"/>
</dbReference>
<dbReference type="EMBL" id="CP002933">
    <property type="protein sequence ID" value="AEL69413.1"/>
    <property type="molecule type" value="Genomic_DNA"/>
</dbReference>
<dbReference type="RefSeq" id="WP_011600875.1">
    <property type="nucleotide sequence ID" value="NC_008277.1"/>
</dbReference>
<dbReference type="SMR" id="Q0SNY1"/>
<dbReference type="STRING" id="29518.BLA32_03395"/>
<dbReference type="KEGG" id="baf:BAPKO_0185"/>
<dbReference type="KEGG" id="bafz:BafPKo_0180"/>
<dbReference type="PATRIC" id="fig|390236.22.peg.178"/>
<dbReference type="eggNOG" id="COG1699">
    <property type="taxonomic scope" value="Bacteria"/>
</dbReference>
<dbReference type="HOGENOM" id="CLU_112356_0_2_12"/>
<dbReference type="OrthoDB" id="9801235at2"/>
<dbReference type="Proteomes" id="UP000005216">
    <property type="component" value="Chromosome"/>
</dbReference>
<dbReference type="GO" id="GO:0005737">
    <property type="term" value="C:cytoplasm"/>
    <property type="evidence" value="ECO:0007669"/>
    <property type="project" value="UniProtKB-SubCell"/>
</dbReference>
<dbReference type="GO" id="GO:0044780">
    <property type="term" value="P:bacterial-type flagellum assembly"/>
    <property type="evidence" value="ECO:0007669"/>
    <property type="project" value="UniProtKB-UniRule"/>
</dbReference>
<dbReference type="GO" id="GO:0006417">
    <property type="term" value="P:regulation of translation"/>
    <property type="evidence" value="ECO:0007669"/>
    <property type="project" value="UniProtKB-KW"/>
</dbReference>
<dbReference type="Gene3D" id="2.30.290.10">
    <property type="entry name" value="BH3618-like"/>
    <property type="match status" value="1"/>
</dbReference>
<dbReference type="HAMAP" id="MF_01185">
    <property type="entry name" value="FliW"/>
    <property type="match status" value="1"/>
</dbReference>
<dbReference type="InterPro" id="IPR003775">
    <property type="entry name" value="Flagellar_assembly_factor_FliW"/>
</dbReference>
<dbReference type="InterPro" id="IPR024046">
    <property type="entry name" value="Flagellar_assmbl_FliW_dom_sf"/>
</dbReference>
<dbReference type="NCBIfam" id="NF009793">
    <property type="entry name" value="PRK13285.1-1"/>
    <property type="match status" value="1"/>
</dbReference>
<dbReference type="PANTHER" id="PTHR39190">
    <property type="entry name" value="FLAGELLAR ASSEMBLY FACTOR FLIW"/>
    <property type="match status" value="1"/>
</dbReference>
<dbReference type="PANTHER" id="PTHR39190:SF1">
    <property type="entry name" value="FLAGELLAR ASSEMBLY FACTOR FLIW"/>
    <property type="match status" value="1"/>
</dbReference>
<dbReference type="Pfam" id="PF02623">
    <property type="entry name" value="FliW"/>
    <property type="match status" value="1"/>
</dbReference>
<dbReference type="SUPFAM" id="SSF141457">
    <property type="entry name" value="BH3618-like"/>
    <property type="match status" value="1"/>
</dbReference>
<reference key="1">
    <citation type="journal article" date="2006" name="BMC Genomics">
        <title>Comparative genome analysis: selection pressure on the Borrelia vls cassettes is essential for infectivity.</title>
        <authorList>
            <person name="Gloeckner G."/>
            <person name="Schulte-Spechtel U."/>
            <person name="Schilhabel M."/>
            <person name="Felder M."/>
            <person name="Suehnel J."/>
            <person name="Wilske B."/>
            <person name="Platzer M."/>
        </authorList>
    </citation>
    <scope>NUCLEOTIDE SEQUENCE [LARGE SCALE GENOMIC DNA]</scope>
    <source>
        <strain>PKo</strain>
    </source>
</reference>
<reference key="2">
    <citation type="journal article" date="2011" name="J. Bacteriol.">
        <title>Whole-genome sequences of two Borrelia afzelii and two Borrelia garinii Lyme disease agent isolates.</title>
        <authorList>
            <person name="Casjens S.R."/>
            <person name="Mongodin E.F."/>
            <person name="Qiu W.G."/>
            <person name="Dunn J.J."/>
            <person name="Luft B.J."/>
            <person name="Fraser-Liggett C.M."/>
            <person name="Schutzer S.E."/>
        </authorList>
    </citation>
    <scope>NUCLEOTIDE SEQUENCE [LARGE SCALE GENOMIC DNA]</scope>
    <source>
        <strain>PKo</strain>
    </source>
</reference>
<comment type="function">
    <text evidence="1">Acts as an anti-CsrA protein, binds CsrA and prevents it from repressing translation of its target genes, one of which is flagellin. Binds to flagellin and participates in the assembly of the flagellum.</text>
</comment>
<comment type="subunit">
    <text evidence="1">Interacts with translational regulator CsrA and flagellin(s).</text>
</comment>
<comment type="subcellular location">
    <subcellularLocation>
        <location evidence="1">Cytoplasm</location>
    </subcellularLocation>
</comment>
<comment type="similarity">
    <text evidence="1">Belongs to the FliW family.</text>
</comment>
<accession>Q0SNY1</accession>
<accession>G0IR27</accession>
<name>FLIW_BORAP</name>
<feature type="chain" id="PRO_0000272972" description="Flagellar assembly factor FliW">
    <location>
        <begin position="1"/>
        <end position="132"/>
    </location>
</feature>
<proteinExistence type="inferred from homology"/>
<protein>
    <recommendedName>
        <fullName evidence="1">Flagellar assembly factor FliW</fullName>
    </recommendedName>
</protein>
<sequence>MTNENSIGIEFDFPEGILGFENIKTFIIKDSKHKPFSIMQSINKDVSFLVTSPFNFLNEYLPNIEEKDWSDIDAKAEDEKVILCIINMHVNDYKDITANLKAPIIINKKKLLGKQAICTNEKYSLRHKVFKE</sequence>
<gene>
    <name evidence="1" type="primary">fliW</name>
    <name type="ordered locus">BAPKO_0185</name>
    <name type="ordered locus">BafPKo_0180</name>
</gene>
<evidence type="ECO:0000255" key="1">
    <source>
        <dbReference type="HAMAP-Rule" id="MF_01185"/>
    </source>
</evidence>
<keyword id="KW-1005">Bacterial flagellum biogenesis</keyword>
<keyword id="KW-0143">Chaperone</keyword>
<keyword id="KW-0963">Cytoplasm</keyword>
<keyword id="KW-0810">Translation regulation</keyword>